<dbReference type="EMBL" id="AL513382">
    <property type="protein sequence ID" value="CAD02795.1"/>
    <property type="molecule type" value="Genomic_DNA"/>
</dbReference>
<dbReference type="EMBL" id="AE014613">
    <property type="protein sequence ID" value="AAO67990.1"/>
    <property type="molecule type" value="Genomic_DNA"/>
</dbReference>
<dbReference type="RefSeq" id="NP_457121.1">
    <property type="nucleotide sequence ID" value="NC_003198.1"/>
</dbReference>
<dbReference type="RefSeq" id="WP_000627811.1">
    <property type="nucleotide sequence ID" value="NZ_WSUR01000007.1"/>
</dbReference>
<dbReference type="SMR" id="Q8XFE0"/>
<dbReference type="STRING" id="220341.gene:17586729"/>
<dbReference type="GeneID" id="66757020"/>
<dbReference type="KEGG" id="stt:t0264"/>
<dbReference type="KEGG" id="sty:STY2839"/>
<dbReference type="PATRIC" id="fig|220341.7.peg.2888"/>
<dbReference type="eggNOG" id="COG3445">
    <property type="taxonomic scope" value="Bacteria"/>
</dbReference>
<dbReference type="HOGENOM" id="CLU_133780_0_0_6"/>
<dbReference type="OMA" id="QFEYREL"/>
<dbReference type="OrthoDB" id="9803969at2"/>
<dbReference type="Proteomes" id="UP000000541">
    <property type="component" value="Chromosome"/>
</dbReference>
<dbReference type="Proteomes" id="UP000002670">
    <property type="component" value="Chromosome"/>
</dbReference>
<dbReference type="GO" id="GO:0005829">
    <property type="term" value="C:cytosol"/>
    <property type="evidence" value="ECO:0007669"/>
    <property type="project" value="TreeGrafter"/>
</dbReference>
<dbReference type="GO" id="GO:0008861">
    <property type="term" value="F:formate C-acetyltransferase activity"/>
    <property type="evidence" value="ECO:0007669"/>
    <property type="project" value="TreeGrafter"/>
</dbReference>
<dbReference type="FunFam" id="3.20.70.20:FF:000002">
    <property type="entry name" value="Autonomous glycyl radical cofactor"/>
    <property type="match status" value="1"/>
</dbReference>
<dbReference type="Gene3D" id="3.20.70.20">
    <property type="match status" value="1"/>
</dbReference>
<dbReference type="HAMAP" id="MF_00806">
    <property type="entry name" value="GrcA"/>
    <property type="match status" value="1"/>
</dbReference>
<dbReference type="InterPro" id="IPR050244">
    <property type="entry name" value="Auton_GlycylRad_Cofactor"/>
</dbReference>
<dbReference type="InterPro" id="IPR019777">
    <property type="entry name" value="Form_AcTrfase_GR_CS"/>
</dbReference>
<dbReference type="InterPro" id="IPR001150">
    <property type="entry name" value="Gly_radical"/>
</dbReference>
<dbReference type="InterPro" id="IPR011140">
    <property type="entry name" value="Glycyl_radical_cofactor_GrcA"/>
</dbReference>
<dbReference type="NCBIfam" id="TIGR04365">
    <property type="entry name" value="spare_glycyl"/>
    <property type="match status" value="1"/>
</dbReference>
<dbReference type="PANTHER" id="PTHR30191">
    <property type="entry name" value="FORMATE ACETYLTRANSFERASE"/>
    <property type="match status" value="1"/>
</dbReference>
<dbReference type="PANTHER" id="PTHR30191:SF0">
    <property type="entry name" value="FORMATE ACETYLTRANSFERASE 1"/>
    <property type="match status" value="1"/>
</dbReference>
<dbReference type="Pfam" id="PF01228">
    <property type="entry name" value="Gly_radical"/>
    <property type="match status" value="1"/>
</dbReference>
<dbReference type="PIRSF" id="PIRSF000378">
    <property type="entry name" value="Gly_radicl_yfiD"/>
    <property type="match status" value="1"/>
</dbReference>
<dbReference type="SUPFAM" id="SSF51998">
    <property type="entry name" value="PFL-like glycyl radical enzymes"/>
    <property type="match status" value="1"/>
</dbReference>
<dbReference type="PROSITE" id="PS00850">
    <property type="entry name" value="GLY_RADICAL_1"/>
    <property type="match status" value="1"/>
</dbReference>
<dbReference type="PROSITE" id="PS51149">
    <property type="entry name" value="GLY_RADICAL_2"/>
    <property type="match status" value="1"/>
</dbReference>
<organism>
    <name type="scientific">Salmonella typhi</name>
    <dbReference type="NCBI Taxonomy" id="90370"/>
    <lineage>
        <taxon>Bacteria</taxon>
        <taxon>Pseudomonadati</taxon>
        <taxon>Pseudomonadota</taxon>
        <taxon>Gammaproteobacteria</taxon>
        <taxon>Enterobacterales</taxon>
        <taxon>Enterobacteriaceae</taxon>
        <taxon>Salmonella</taxon>
    </lineage>
</organism>
<keyword id="KW-0556">Organic radical</keyword>
<gene>
    <name evidence="1" type="primary">grcA</name>
    <name type="ordered locus">STY2839</name>
    <name type="ordered locus">t0264</name>
</gene>
<sequence length="127" mass="14344">MITGIQITKAANDDLLNSFWLLDSEKGEARCIVAKSGFAEDEVVAVSKLGEIEYREIPMEVKPEVRVEGGQHLNVNVLRRETLEDAVKHPEKYPQLTIRVSGYAVRFNSLTPEQQRDVIARTFTESL</sequence>
<name>GRCA_SALTI</name>
<protein>
    <recommendedName>
        <fullName evidence="1">Autonomous glycyl radical cofactor</fullName>
    </recommendedName>
</protein>
<proteinExistence type="inferred from homology"/>
<feature type="chain" id="PRO_0000166707" description="Autonomous glycyl radical cofactor">
    <location>
        <begin position="1"/>
        <end position="127"/>
    </location>
</feature>
<feature type="domain" description="Glycine radical" evidence="1">
    <location>
        <begin position="5"/>
        <end position="127"/>
    </location>
</feature>
<feature type="modified residue" description="Glycine radical" evidence="1">
    <location>
        <position position="102"/>
    </location>
</feature>
<accession>Q8XFE0</accession>
<accession>Q7AMH9</accession>
<reference key="1">
    <citation type="journal article" date="2001" name="Nature">
        <title>Complete genome sequence of a multiple drug resistant Salmonella enterica serovar Typhi CT18.</title>
        <authorList>
            <person name="Parkhill J."/>
            <person name="Dougan G."/>
            <person name="James K.D."/>
            <person name="Thomson N.R."/>
            <person name="Pickard D."/>
            <person name="Wain J."/>
            <person name="Churcher C.M."/>
            <person name="Mungall K.L."/>
            <person name="Bentley S.D."/>
            <person name="Holden M.T.G."/>
            <person name="Sebaihia M."/>
            <person name="Baker S."/>
            <person name="Basham D."/>
            <person name="Brooks K."/>
            <person name="Chillingworth T."/>
            <person name="Connerton P."/>
            <person name="Cronin A."/>
            <person name="Davis P."/>
            <person name="Davies R.M."/>
            <person name="Dowd L."/>
            <person name="White N."/>
            <person name="Farrar J."/>
            <person name="Feltwell T."/>
            <person name="Hamlin N."/>
            <person name="Haque A."/>
            <person name="Hien T.T."/>
            <person name="Holroyd S."/>
            <person name="Jagels K."/>
            <person name="Krogh A."/>
            <person name="Larsen T.S."/>
            <person name="Leather S."/>
            <person name="Moule S."/>
            <person name="O'Gaora P."/>
            <person name="Parry C."/>
            <person name="Quail M.A."/>
            <person name="Rutherford K.M."/>
            <person name="Simmonds M."/>
            <person name="Skelton J."/>
            <person name="Stevens K."/>
            <person name="Whitehead S."/>
            <person name="Barrell B.G."/>
        </authorList>
    </citation>
    <scope>NUCLEOTIDE SEQUENCE [LARGE SCALE GENOMIC DNA]</scope>
    <source>
        <strain>CT18</strain>
    </source>
</reference>
<reference key="2">
    <citation type="journal article" date="2003" name="J. Bacteriol.">
        <title>Comparative genomics of Salmonella enterica serovar Typhi strains Ty2 and CT18.</title>
        <authorList>
            <person name="Deng W."/>
            <person name="Liou S.-R."/>
            <person name="Plunkett G. III"/>
            <person name="Mayhew G.F."/>
            <person name="Rose D.J."/>
            <person name="Burland V."/>
            <person name="Kodoyianni V."/>
            <person name="Schwartz D.C."/>
            <person name="Blattner F.R."/>
        </authorList>
    </citation>
    <scope>NUCLEOTIDE SEQUENCE [LARGE SCALE GENOMIC DNA]</scope>
    <source>
        <strain>ATCC 700931 / Ty2</strain>
    </source>
</reference>
<evidence type="ECO:0000255" key="1">
    <source>
        <dbReference type="HAMAP-Rule" id="MF_00806"/>
    </source>
</evidence>
<comment type="function">
    <text evidence="1">Acts as a radical domain for damaged PFL and possibly other radical proteins.</text>
</comment>